<protein>
    <recommendedName>
        <fullName evidence="4">Potassium channel toxin alpha-KTx 9.2</fullName>
    </recommendedName>
    <alternativeName>
        <fullName evidence="3">Neurotoxin BmP03</fullName>
    </alternativeName>
</protein>
<name>KAX92_OLIMR</name>
<reference key="1">
    <citation type="journal article" date="1999" name="FEBS Lett.">
        <title>Genomic organization of three neurotoxins active on small conductance Ca2+-activated potassium channels from the scorpion Buthus martensi Karsch.</title>
        <authorList>
            <person name="Wu J.-J."/>
            <person name="Dai L."/>
            <person name="Lan Z.-D."/>
            <person name="Chi C.-W."/>
        </authorList>
    </citation>
    <scope>NUCLEOTIDE SEQUENCE [GENOMIC DNA]</scope>
    <source>
        <tissue>Venom gland</tissue>
    </source>
</reference>
<reference key="2">
    <citation type="journal article" date="1999" name="FEBS Lett.">
        <title>Molecular cloning and sequencing of two 'short chain' and two 'long chain' K(+) channel-blocking peptides from the Chinese scorpion Buthus martensii Karsch.</title>
        <authorList>
            <person name="Zhu S.-Y."/>
            <person name="Li W.-X."/>
            <person name="Zeng X.-C."/>
            <person name="Jiang D.-H."/>
            <person name="Mao X."/>
            <person name="Liu H."/>
        </authorList>
    </citation>
    <scope>NUCLEOTIDE SEQUENCE [MRNA]</scope>
    <source>
        <tissue>Venom gland</tissue>
    </source>
</reference>
<reference key="3">
    <citation type="journal article" date="1997" name="Eur. J. Biochem.">
        <title>Characterization of four toxins from Buthus martensi scorpion venom, which act on apamin-sensitive Ca2+-activated K+ channels.</title>
        <authorList>
            <person name="Romi-Lebrun R."/>
            <person name="Martin-Eauclaire M.-F."/>
            <person name="Escoubas P."/>
            <person name="Wu F.Q."/>
            <person name="Lebrun B."/>
            <person name="Hisada M."/>
            <person name="Nakajima T."/>
        </authorList>
    </citation>
    <scope>PROTEIN SEQUENCE OF 29-56</scope>
    <scope>SUBCELLULAR LOCATION</scope>
    <scope>MASS SPECTROMETRY</scope>
</reference>
<reference key="4">
    <citation type="journal article" date="2000" name="Acta Chim. Sin.">
        <title>Three-dimensional structure of BmP03 from venom of scorpion Buthus martensii Karsch.</title>
        <authorList>
            <person name="He F."/>
            <person name="Li Y."/>
            <person name="Wu G."/>
            <person name="Cao C."/>
            <person name="Wu H."/>
        </authorList>
    </citation>
    <scope>STRUCTURE BY NMR OF 29-56</scope>
    <scope>DISULFIDE BONDS</scope>
</reference>
<feature type="signal peptide" evidence="1">
    <location>
        <begin position="1"/>
        <end position="28"/>
    </location>
</feature>
<feature type="peptide" id="PRO_0000035350" description="Potassium channel toxin alpha-KTx 9.2" evidence="1">
    <location>
        <begin position="29"/>
        <end position="56"/>
    </location>
</feature>
<feature type="disulfide bond" evidence="2 6">
    <location>
        <begin position="31"/>
        <end position="47"/>
    </location>
</feature>
<feature type="disulfide bond" evidence="2 6">
    <location>
        <begin position="34"/>
        <end position="52"/>
    </location>
</feature>
<feature type="disulfide bond" evidence="2 6">
    <location>
        <begin position="38"/>
        <end position="54"/>
    </location>
</feature>
<feature type="helix" evidence="7">
    <location>
        <begin position="36"/>
        <end position="38"/>
    </location>
</feature>
<feature type="strand" evidence="7">
    <location>
        <begin position="40"/>
        <end position="42"/>
    </location>
</feature>
<feature type="strand" evidence="7">
    <location>
        <begin position="49"/>
        <end position="51"/>
    </location>
</feature>
<keyword id="KW-0002">3D-structure</keyword>
<keyword id="KW-1221">Calcium-activated potassium channel impairing toxin</keyword>
<keyword id="KW-0903">Direct protein sequencing</keyword>
<keyword id="KW-1015">Disulfide bond</keyword>
<keyword id="KW-0872">Ion channel impairing toxin</keyword>
<keyword id="KW-0528">Neurotoxin</keyword>
<keyword id="KW-0632">Potassium channel impairing toxin</keyword>
<keyword id="KW-0964">Secreted</keyword>
<keyword id="KW-0732">Signal</keyword>
<keyword id="KW-0800">Toxin</keyword>
<evidence type="ECO:0000269" key="1">
    <source>
    </source>
</evidence>
<evidence type="ECO:0000269" key="2">
    <source ref="4"/>
</evidence>
<evidence type="ECO:0000303" key="3">
    <source>
    </source>
</evidence>
<evidence type="ECO:0000305" key="4"/>
<evidence type="ECO:0000305" key="5">
    <source>
    </source>
</evidence>
<evidence type="ECO:0000312" key="6">
    <source>
        <dbReference type="PDB" id="1WM8"/>
    </source>
</evidence>
<evidence type="ECO:0007829" key="7">
    <source>
        <dbReference type="PDB" id="1WM8"/>
    </source>
</evidence>
<accession>Q9U8D1</accession>
<dbReference type="EMBL" id="AF097408">
    <property type="protein sequence ID" value="AAF01253.1"/>
    <property type="molecule type" value="Genomic_DNA"/>
</dbReference>
<dbReference type="EMBL" id="AF156170">
    <property type="protein sequence ID" value="AAF29463.1"/>
    <property type="molecule type" value="mRNA"/>
</dbReference>
<dbReference type="PDB" id="1WM8">
    <property type="method" value="NMR"/>
    <property type="chains" value="A=29-56"/>
</dbReference>
<dbReference type="PDBsum" id="1WM8"/>
<dbReference type="SMR" id="Q9U8D1"/>
<dbReference type="EvolutionaryTrace" id="Q9U8D1"/>
<dbReference type="GO" id="GO:0005576">
    <property type="term" value="C:extracellular region"/>
    <property type="evidence" value="ECO:0007669"/>
    <property type="project" value="UniProtKB-SubCell"/>
</dbReference>
<dbReference type="GO" id="GO:0008200">
    <property type="term" value="F:ion channel inhibitor activity"/>
    <property type="evidence" value="ECO:0007669"/>
    <property type="project" value="InterPro"/>
</dbReference>
<dbReference type="GO" id="GO:0015459">
    <property type="term" value="F:potassium channel regulator activity"/>
    <property type="evidence" value="ECO:0007669"/>
    <property type="project" value="UniProtKB-KW"/>
</dbReference>
<dbReference type="GO" id="GO:0090729">
    <property type="term" value="F:toxin activity"/>
    <property type="evidence" value="ECO:0007669"/>
    <property type="project" value="UniProtKB-KW"/>
</dbReference>
<dbReference type="InterPro" id="IPR036574">
    <property type="entry name" value="Scorpion_toxin-like_sf"/>
</dbReference>
<dbReference type="InterPro" id="IPR008911">
    <property type="entry name" value="Toxin_alpha-KTx_8/9"/>
</dbReference>
<dbReference type="Pfam" id="PF05453">
    <property type="entry name" value="Toxin_6"/>
    <property type="match status" value="1"/>
</dbReference>
<dbReference type="SUPFAM" id="SSF57095">
    <property type="entry name" value="Scorpion toxin-like"/>
    <property type="match status" value="1"/>
</dbReference>
<comment type="function">
    <text>Blocks small conductance calcium-activated potassium channels (KCNN, SK). Low toxicity by intracerebroventricular injection into mice.</text>
</comment>
<comment type="subcellular location">
    <subcellularLocation>
        <location evidence="1">Secreted</location>
    </subcellularLocation>
</comment>
<comment type="tissue specificity">
    <text evidence="5">Expressed by the venom gland.</text>
</comment>
<comment type="domain">
    <text evidence="2">Has the structural arrangement of an alpha-helix connected to a beta-sheet by disulfide bonds (CSalpha/beta).</text>
</comment>
<comment type="mass spectrometry" mass="2935.29" method="MALDI" evidence="1"/>
<comment type="similarity">
    <text evidence="4">Belongs to the short scorpion toxin superfamily. Potassium channel inhibitor family. Alpha-KTx 09 subfamily.</text>
</comment>
<proteinExistence type="evidence at protein level"/>
<sequence length="56" mass="6001">MSRLFTLVLIVLAMNVMMAIISDPVVEAVGCEECPMHCKGKNANPTCDDGVCNCNV</sequence>
<organism>
    <name type="scientific">Olivierus martensii</name>
    <name type="common">Manchurian scorpion</name>
    <name type="synonym">Mesobuthus martensii</name>
    <dbReference type="NCBI Taxonomy" id="34649"/>
    <lineage>
        <taxon>Eukaryota</taxon>
        <taxon>Metazoa</taxon>
        <taxon>Ecdysozoa</taxon>
        <taxon>Arthropoda</taxon>
        <taxon>Chelicerata</taxon>
        <taxon>Arachnida</taxon>
        <taxon>Scorpiones</taxon>
        <taxon>Buthida</taxon>
        <taxon>Buthoidea</taxon>
        <taxon>Buthidae</taxon>
        <taxon>Olivierus</taxon>
    </lineage>
</organism>